<keyword id="KW-0067">ATP-binding</keyword>
<keyword id="KW-0173">Coenzyme A biosynthesis</keyword>
<keyword id="KW-0963">Cytoplasm</keyword>
<keyword id="KW-0460">Magnesium</keyword>
<keyword id="KW-0547">Nucleotide-binding</keyword>
<keyword id="KW-0548">Nucleotidyltransferase</keyword>
<keyword id="KW-0808">Transferase</keyword>
<comment type="function">
    <text evidence="1">Reversibly transfers an adenylyl group from ATP to 4'-phosphopantetheine, yielding dephospho-CoA (dPCoA) and pyrophosphate.</text>
</comment>
<comment type="catalytic activity">
    <reaction evidence="1">
        <text>(R)-4'-phosphopantetheine + ATP + H(+) = 3'-dephospho-CoA + diphosphate</text>
        <dbReference type="Rhea" id="RHEA:19801"/>
        <dbReference type="ChEBI" id="CHEBI:15378"/>
        <dbReference type="ChEBI" id="CHEBI:30616"/>
        <dbReference type="ChEBI" id="CHEBI:33019"/>
        <dbReference type="ChEBI" id="CHEBI:57328"/>
        <dbReference type="ChEBI" id="CHEBI:61723"/>
        <dbReference type="EC" id="2.7.7.3"/>
    </reaction>
</comment>
<comment type="cofactor">
    <cofactor evidence="1">
        <name>Mg(2+)</name>
        <dbReference type="ChEBI" id="CHEBI:18420"/>
    </cofactor>
</comment>
<comment type="pathway">
    <text evidence="1">Cofactor biosynthesis; coenzyme A biosynthesis; CoA from (R)-pantothenate: step 4/5.</text>
</comment>
<comment type="subunit">
    <text evidence="1">Homohexamer.</text>
</comment>
<comment type="subcellular location">
    <subcellularLocation>
        <location evidence="1">Cytoplasm</location>
    </subcellularLocation>
</comment>
<comment type="similarity">
    <text evidence="1">Belongs to the bacterial CoaD family.</text>
</comment>
<sequence length="172" mass="19242">MDSQKSCIAVYPGTFDPLTNGHVSLVRRAAMIFGTVIVAVAGDSHKTPLFTLDERVAIAEQVFANDRRVLVEGFKGLLVNYVKSREANVILRGMRAVSDFEFEFQMALMNRKLDRTIETVFIMTDYKWLYISSTIVKEVAKHGGDIRGMVPEHVRERMLERFGPANGSGEGA</sequence>
<protein>
    <recommendedName>
        <fullName evidence="1">Phosphopantetheine adenylyltransferase</fullName>
        <ecNumber evidence="1">2.7.7.3</ecNumber>
    </recommendedName>
    <alternativeName>
        <fullName evidence="1">Dephospho-CoA pyrophosphorylase</fullName>
    </alternativeName>
    <alternativeName>
        <fullName evidence="1">Pantetheine-phosphate adenylyltransferase</fullName>
        <shortName evidence="1">PPAT</shortName>
    </alternativeName>
</protein>
<reference key="1">
    <citation type="journal article" date="2009" name="Genome Res.">
        <title>Whole genome sequence of Desulfovibrio magneticus strain RS-1 revealed common gene clusters in magnetotactic bacteria.</title>
        <authorList>
            <person name="Nakazawa H."/>
            <person name="Arakaki A."/>
            <person name="Narita-Yamada S."/>
            <person name="Yashiro I."/>
            <person name="Jinno K."/>
            <person name="Aoki N."/>
            <person name="Tsuruyama A."/>
            <person name="Okamura Y."/>
            <person name="Tanikawa S."/>
            <person name="Fujita N."/>
            <person name="Takeyama H."/>
            <person name="Matsunaga T."/>
        </authorList>
    </citation>
    <scope>NUCLEOTIDE SEQUENCE [LARGE SCALE GENOMIC DNA]</scope>
    <source>
        <strain>ATCC 700980 / DSM 13731 / RS-1</strain>
    </source>
</reference>
<organism>
    <name type="scientific">Solidesulfovibrio magneticus (strain ATCC 700980 / DSM 13731 / RS-1)</name>
    <name type="common">Desulfovibrio magneticus</name>
    <dbReference type="NCBI Taxonomy" id="573370"/>
    <lineage>
        <taxon>Bacteria</taxon>
        <taxon>Pseudomonadati</taxon>
        <taxon>Thermodesulfobacteriota</taxon>
        <taxon>Desulfovibrionia</taxon>
        <taxon>Desulfovibrionales</taxon>
        <taxon>Desulfovibrionaceae</taxon>
        <taxon>Solidesulfovibrio</taxon>
    </lineage>
</organism>
<proteinExistence type="inferred from homology"/>
<name>COAD_SOLM1</name>
<dbReference type="EC" id="2.7.7.3" evidence="1"/>
<dbReference type="EMBL" id="AP010904">
    <property type="protein sequence ID" value="BAH75663.1"/>
    <property type="molecule type" value="Genomic_DNA"/>
</dbReference>
<dbReference type="RefSeq" id="WP_015860847.1">
    <property type="nucleotide sequence ID" value="NC_012796.1"/>
</dbReference>
<dbReference type="SMR" id="C4XSE1"/>
<dbReference type="STRING" id="573370.DMR_21720"/>
<dbReference type="KEGG" id="dma:DMR_21720"/>
<dbReference type="eggNOG" id="COG0669">
    <property type="taxonomic scope" value="Bacteria"/>
</dbReference>
<dbReference type="HOGENOM" id="CLU_100149_0_1_7"/>
<dbReference type="OrthoDB" id="9806661at2"/>
<dbReference type="UniPathway" id="UPA00241">
    <property type="reaction ID" value="UER00355"/>
</dbReference>
<dbReference type="Proteomes" id="UP000009071">
    <property type="component" value="Chromosome"/>
</dbReference>
<dbReference type="GO" id="GO:0005737">
    <property type="term" value="C:cytoplasm"/>
    <property type="evidence" value="ECO:0007669"/>
    <property type="project" value="UniProtKB-SubCell"/>
</dbReference>
<dbReference type="GO" id="GO:0005524">
    <property type="term" value="F:ATP binding"/>
    <property type="evidence" value="ECO:0007669"/>
    <property type="project" value="UniProtKB-KW"/>
</dbReference>
<dbReference type="GO" id="GO:0004595">
    <property type="term" value="F:pantetheine-phosphate adenylyltransferase activity"/>
    <property type="evidence" value="ECO:0007669"/>
    <property type="project" value="UniProtKB-UniRule"/>
</dbReference>
<dbReference type="GO" id="GO:0015937">
    <property type="term" value="P:coenzyme A biosynthetic process"/>
    <property type="evidence" value="ECO:0007669"/>
    <property type="project" value="UniProtKB-UniRule"/>
</dbReference>
<dbReference type="CDD" id="cd02163">
    <property type="entry name" value="PPAT"/>
    <property type="match status" value="1"/>
</dbReference>
<dbReference type="Gene3D" id="3.40.50.620">
    <property type="entry name" value="HUPs"/>
    <property type="match status" value="1"/>
</dbReference>
<dbReference type="HAMAP" id="MF_00151">
    <property type="entry name" value="PPAT_bact"/>
    <property type="match status" value="1"/>
</dbReference>
<dbReference type="InterPro" id="IPR004821">
    <property type="entry name" value="Cyt_trans-like"/>
</dbReference>
<dbReference type="InterPro" id="IPR001980">
    <property type="entry name" value="PPAT"/>
</dbReference>
<dbReference type="InterPro" id="IPR014729">
    <property type="entry name" value="Rossmann-like_a/b/a_fold"/>
</dbReference>
<dbReference type="NCBIfam" id="TIGR01510">
    <property type="entry name" value="coaD_prev_kdtB"/>
    <property type="match status" value="1"/>
</dbReference>
<dbReference type="NCBIfam" id="TIGR00125">
    <property type="entry name" value="cyt_tran_rel"/>
    <property type="match status" value="1"/>
</dbReference>
<dbReference type="PANTHER" id="PTHR21342">
    <property type="entry name" value="PHOSPHOPANTETHEINE ADENYLYLTRANSFERASE"/>
    <property type="match status" value="1"/>
</dbReference>
<dbReference type="PANTHER" id="PTHR21342:SF1">
    <property type="entry name" value="PHOSPHOPANTETHEINE ADENYLYLTRANSFERASE"/>
    <property type="match status" value="1"/>
</dbReference>
<dbReference type="Pfam" id="PF01467">
    <property type="entry name" value="CTP_transf_like"/>
    <property type="match status" value="1"/>
</dbReference>
<dbReference type="PRINTS" id="PR01020">
    <property type="entry name" value="LPSBIOSNTHSS"/>
</dbReference>
<dbReference type="SUPFAM" id="SSF52374">
    <property type="entry name" value="Nucleotidylyl transferase"/>
    <property type="match status" value="1"/>
</dbReference>
<evidence type="ECO:0000255" key="1">
    <source>
        <dbReference type="HAMAP-Rule" id="MF_00151"/>
    </source>
</evidence>
<accession>C4XSE1</accession>
<feature type="chain" id="PRO_1000203417" description="Phosphopantetheine adenylyltransferase">
    <location>
        <begin position="1"/>
        <end position="172"/>
    </location>
</feature>
<feature type="binding site" evidence="1">
    <location>
        <begin position="14"/>
        <end position="15"/>
    </location>
    <ligand>
        <name>ATP</name>
        <dbReference type="ChEBI" id="CHEBI:30616"/>
    </ligand>
</feature>
<feature type="binding site" evidence="1">
    <location>
        <position position="14"/>
    </location>
    <ligand>
        <name>substrate</name>
    </ligand>
</feature>
<feature type="binding site" evidence="1">
    <location>
        <position position="22"/>
    </location>
    <ligand>
        <name>ATP</name>
        <dbReference type="ChEBI" id="CHEBI:30616"/>
    </ligand>
</feature>
<feature type="binding site" evidence="1">
    <location>
        <position position="46"/>
    </location>
    <ligand>
        <name>substrate</name>
    </ligand>
</feature>
<feature type="binding site" evidence="1">
    <location>
        <position position="78"/>
    </location>
    <ligand>
        <name>substrate</name>
    </ligand>
</feature>
<feature type="binding site" evidence="1">
    <location>
        <position position="92"/>
    </location>
    <ligand>
        <name>substrate</name>
    </ligand>
</feature>
<feature type="binding site" evidence="1">
    <location>
        <begin position="93"/>
        <end position="95"/>
    </location>
    <ligand>
        <name>ATP</name>
        <dbReference type="ChEBI" id="CHEBI:30616"/>
    </ligand>
</feature>
<feature type="binding site" evidence="1">
    <location>
        <position position="103"/>
    </location>
    <ligand>
        <name>ATP</name>
        <dbReference type="ChEBI" id="CHEBI:30616"/>
    </ligand>
</feature>
<feature type="binding site" evidence="1">
    <location>
        <begin position="128"/>
        <end position="134"/>
    </location>
    <ligand>
        <name>ATP</name>
        <dbReference type="ChEBI" id="CHEBI:30616"/>
    </ligand>
</feature>
<feature type="site" description="Transition state stabilizer" evidence="1">
    <location>
        <position position="22"/>
    </location>
</feature>
<gene>
    <name evidence="1" type="primary">coaD</name>
    <name type="ordered locus">DMR_21720</name>
</gene>